<protein>
    <recommendedName>
        <fullName>Innexin unc-9</fullName>
    </recommendedName>
    <alternativeName>
        <fullName>Uncoordinated protein 9</fullName>
    </alternativeName>
</protein>
<gene>
    <name evidence="5" type="primary">unc-9</name>
    <name evidence="5" type="ORF">R12H7.1</name>
</gene>
<proteinExistence type="evidence at protein level"/>
<evidence type="ECO:0000255" key="1">
    <source>
        <dbReference type="PROSITE-ProRule" id="PRU00351"/>
    </source>
</evidence>
<evidence type="ECO:0000269" key="2">
    <source>
    </source>
</evidence>
<evidence type="ECO:0000269" key="3">
    <source>
    </source>
</evidence>
<evidence type="ECO:0000305" key="4"/>
<evidence type="ECO:0000312" key="5">
    <source>
        <dbReference type="WormBase" id="R12H7.1a"/>
    </source>
</evidence>
<feature type="chain" id="PRO_0000208518" description="Innexin unc-9">
    <location>
        <begin position="1"/>
        <end position="386"/>
    </location>
</feature>
<feature type="transmembrane region" description="Helical" evidence="1">
    <location>
        <begin position="33"/>
        <end position="53"/>
    </location>
</feature>
<feature type="transmembrane region" description="Helical" evidence="1">
    <location>
        <begin position="103"/>
        <end position="123"/>
    </location>
</feature>
<feature type="transmembrane region" description="Helical" evidence="1">
    <location>
        <begin position="197"/>
        <end position="217"/>
    </location>
</feature>
<feature type="transmembrane region" description="Helical" evidence="1">
    <location>
        <begin position="282"/>
        <end position="302"/>
    </location>
</feature>
<reference key="1">
    <citation type="journal article" date="1997" name="J. Neurochem.">
        <title>The C. elegans avermectin resistance and anesthetic response gene unc-9 encodes a member of a protein family implicated in electrical coupling of excitable cells.</title>
        <authorList>
            <person name="Barnes T.M."/>
            <person name="Hekimi S."/>
        </authorList>
    </citation>
    <scope>NUCLEOTIDE SEQUENCE [MRNA]</scope>
    <source>
        <strain>Bristol N2</strain>
    </source>
</reference>
<reference key="2">
    <citation type="journal article" date="1998" name="Science">
        <title>Genome sequence of the nematode C. elegans: a platform for investigating biology.</title>
        <authorList>
            <consortium name="The C. elegans sequencing consortium"/>
        </authorList>
    </citation>
    <scope>NUCLEOTIDE SEQUENCE [LARGE SCALE GENOMIC DNA]</scope>
    <source>
        <strain>Bristol N2</strain>
    </source>
</reference>
<reference key="3">
    <citation type="journal article" date="2016" name="PLoS Genet.">
        <title>Regulation of Gap Junction Dynamics by UNC-44/ankyrin and UNC-33/CRMP through VAB-8 in C. elegans Neurons.</title>
        <authorList>
            <person name="Meng L."/>
            <person name="Chen C.H."/>
            <person name="Yan D."/>
        </authorList>
    </citation>
    <scope>FUNCTION</scope>
    <scope>SUBCELLULAR LOCATION</scope>
    <scope>TISSUE SPECIFICITY</scope>
</reference>
<reference key="4">
    <citation type="journal article" date="2020" name="Dev. Cell">
        <title>NLR-1/CASPR Anchors F-Actin to Promote Gap Junction Formation.</title>
        <authorList>
            <person name="Meng L."/>
            <person name="Yan D."/>
        </authorList>
    </citation>
    <scope>FUNCTION</scope>
    <scope>INTERACTION WITH F-ACTIN</scope>
    <scope>SUBCELLULAR LOCATION</scope>
    <scope>TISSUE SPECIFICITY</scope>
</reference>
<accession>O01393</accession>
<accession>Q9NAN6</accession>
<organism>
    <name type="scientific">Caenorhabditis elegans</name>
    <dbReference type="NCBI Taxonomy" id="6239"/>
    <lineage>
        <taxon>Eukaryota</taxon>
        <taxon>Metazoa</taxon>
        <taxon>Ecdysozoa</taxon>
        <taxon>Nematoda</taxon>
        <taxon>Chromadorea</taxon>
        <taxon>Rhabditida</taxon>
        <taxon>Rhabditina</taxon>
        <taxon>Rhabditomorpha</taxon>
        <taxon>Rhabditoidea</taxon>
        <taxon>Rhabditidae</taxon>
        <taxon>Peloderinae</taxon>
        <taxon>Caenorhabditis</taxon>
    </lineage>
</organism>
<keyword id="KW-0965">Cell junction</keyword>
<keyword id="KW-1003">Cell membrane</keyword>
<keyword id="KW-0303">Gap junction</keyword>
<keyword id="KW-0407">Ion channel</keyword>
<keyword id="KW-0406">Ion transport</keyword>
<keyword id="KW-0472">Membrane</keyword>
<keyword id="KW-1185">Reference proteome</keyword>
<keyword id="KW-0812">Transmembrane</keyword>
<keyword id="KW-1133">Transmembrane helix</keyword>
<keyword id="KW-0813">Transport</keyword>
<comment type="function">
    <text evidence="2 3">Structural component of gap junctions (PubMed:27015090, PubMed:33238150). Plays a role in maintaining gap junction activity to promote locomotion (PubMed:33238150).</text>
</comment>
<comment type="subunit">
    <text evidence="3 4">Heterooligomer of unc-7 and unc-9. Interacts with F-actin (PubMed:33238150).</text>
</comment>
<comment type="subcellular location">
    <subcellularLocation>
        <location evidence="4">Cell membrane</location>
        <topology evidence="1">Multi-pass membrane protein</topology>
    </subcellularLocation>
    <subcellularLocation>
        <location evidence="2 3">Cell junction</location>
        <location evidence="2 3">Gap junction</location>
    </subcellularLocation>
    <text evidence="2">Co-localizes with unc-1 at the gap junctions formed between PLM and other neurons.</text>
</comment>
<comment type="tissue specificity">
    <text evidence="2 3">Expressed in PLM neurons (at protein level). Expressed in the nerve ring (PubMed:33238150).</text>
</comment>
<comment type="similarity">
    <text evidence="1">Belongs to the pannexin family.</text>
</comment>
<dbReference type="EMBL" id="U93195">
    <property type="protein sequence ID" value="AAB51534.1"/>
    <property type="molecule type" value="mRNA"/>
</dbReference>
<dbReference type="EMBL" id="BX284606">
    <property type="protein sequence ID" value="CAB61030.2"/>
    <property type="molecule type" value="Genomic_DNA"/>
</dbReference>
<dbReference type="RefSeq" id="NP_741917.1">
    <property type="nucleotide sequence ID" value="NM_171790.8"/>
</dbReference>
<dbReference type="SMR" id="O01393"/>
<dbReference type="BioGRID" id="46346">
    <property type="interactions" value="4"/>
</dbReference>
<dbReference type="FunCoup" id="O01393">
    <property type="interactions" value="227"/>
</dbReference>
<dbReference type="STRING" id="6239.R12H7.1a.1"/>
<dbReference type="PaxDb" id="6239-R12H7.1"/>
<dbReference type="PeptideAtlas" id="O01393"/>
<dbReference type="EnsemblMetazoa" id="R12H7.1a.1">
    <property type="protein sequence ID" value="R12H7.1a.1"/>
    <property type="gene ID" value="WBGene00006749"/>
</dbReference>
<dbReference type="EnsemblMetazoa" id="R12H7.1a.2">
    <property type="protein sequence ID" value="R12H7.1a.2"/>
    <property type="gene ID" value="WBGene00006749"/>
</dbReference>
<dbReference type="GeneID" id="181443"/>
<dbReference type="KEGG" id="cel:CELE_R12H7.1"/>
<dbReference type="UCSC" id="R12H7.1">
    <property type="organism name" value="c. elegans"/>
</dbReference>
<dbReference type="AGR" id="WB:WBGene00006749"/>
<dbReference type="CTD" id="181443"/>
<dbReference type="WormBase" id="R12H7.1a">
    <property type="protein sequence ID" value="CE28246"/>
    <property type="gene ID" value="WBGene00006749"/>
    <property type="gene designation" value="unc-9"/>
</dbReference>
<dbReference type="eggNOG" id="ENOG502QSWG">
    <property type="taxonomic scope" value="Eukaryota"/>
</dbReference>
<dbReference type="HOGENOM" id="CLU_035763_0_1_1"/>
<dbReference type="InParanoid" id="O01393"/>
<dbReference type="OMA" id="CQFFKFG"/>
<dbReference type="OrthoDB" id="5867527at2759"/>
<dbReference type="PhylomeDB" id="O01393"/>
<dbReference type="PRO" id="PR:O01393"/>
<dbReference type="Proteomes" id="UP000001940">
    <property type="component" value="Chromosome X"/>
</dbReference>
<dbReference type="Bgee" id="WBGene00006749">
    <property type="expression patterns" value="Expressed in pharyngeal muscle cell (C elegans) and 3 other cell types or tissues"/>
</dbReference>
<dbReference type="ExpressionAtlas" id="O01393">
    <property type="expression patterns" value="baseline and differential"/>
</dbReference>
<dbReference type="GO" id="GO:0005911">
    <property type="term" value="C:cell-cell junction"/>
    <property type="evidence" value="ECO:0000314"/>
    <property type="project" value="WormBase"/>
</dbReference>
<dbReference type="GO" id="GO:0005921">
    <property type="term" value="C:gap junction"/>
    <property type="evidence" value="ECO:0000314"/>
    <property type="project" value="UniProtKB"/>
</dbReference>
<dbReference type="GO" id="GO:0005886">
    <property type="term" value="C:plasma membrane"/>
    <property type="evidence" value="ECO:0000318"/>
    <property type="project" value="GO_Central"/>
</dbReference>
<dbReference type="GO" id="GO:0051015">
    <property type="term" value="F:actin filament binding"/>
    <property type="evidence" value="ECO:0000314"/>
    <property type="project" value="UniProtKB"/>
</dbReference>
<dbReference type="GO" id="GO:0005243">
    <property type="term" value="F:gap junction channel activity"/>
    <property type="evidence" value="ECO:0000314"/>
    <property type="project" value="WormBase"/>
</dbReference>
<dbReference type="GO" id="GO:0055077">
    <property type="term" value="F:gap junction hemi-channel activity"/>
    <property type="evidence" value="ECO:0000250"/>
    <property type="project" value="UniProtKB"/>
</dbReference>
<dbReference type="GO" id="GO:0034220">
    <property type="term" value="P:monoatomic ion transmembrane transport"/>
    <property type="evidence" value="ECO:0000314"/>
    <property type="project" value="WormBase"/>
</dbReference>
<dbReference type="GO" id="GO:0040017">
    <property type="term" value="P:positive regulation of locomotion"/>
    <property type="evidence" value="ECO:0000315"/>
    <property type="project" value="UniProtKB"/>
</dbReference>
<dbReference type="InterPro" id="IPR000990">
    <property type="entry name" value="Innexin"/>
</dbReference>
<dbReference type="PANTHER" id="PTHR11893">
    <property type="entry name" value="INNEXIN"/>
    <property type="match status" value="1"/>
</dbReference>
<dbReference type="PANTHER" id="PTHR11893:SF30">
    <property type="entry name" value="INNEXIN UNC-9"/>
    <property type="match status" value="1"/>
</dbReference>
<dbReference type="Pfam" id="PF00876">
    <property type="entry name" value="Innexin"/>
    <property type="match status" value="1"/>
</dbReference>
<dbReference type="PRINTS" id="PR01262">
    <property type="entry name" value="INNEXIN"/>
</dbReference>
<dbReference type="PROSITE" id="PS51013">
    <property type="entry name" value="PANNEXIN"/>
    <property type="match status" value="1"/>
</dbReference>
<name>UNC9_CAEEL</name>
<sequence length="386" mass="45192">MSMLLYYFASAVKSIQFHVDDDIIDKLNYYYTTAIITVFAILVSAKQYVGFPIQCWVPATFTEPMEQYTENYCWVQNTYFLPLHDYIPHNYAERENRQIGYYQWVPFVLALEALLFYVPTIVWRLLSWQSGIHVQSLVQMACDSRLLDLESRNRALQTIATNVEEALHVKHQVMSGNRLKLLNLIICTRSSGAAVTFLYISVKILYTVNIVGQIFLLNTFLGNRSKWYGLQVLNDLMNGREWEESGHFPRVTLCDFEVKVLGNVHRHTVQCVLMINMFNEKIFLFLWFWYFLLAGATLCSLFYWIYISVVPSRQLNFVGKYLTGIEGYKMVDSQSLRRFVFHFLRQDGVFLLRMVATHAGELPCYELAKTLWNNYCDNKEGKMHDV</sequence>